<organism>
    <name type="scientific">Drosophila melanogaster</name>
    <name type="common">Fruit fly</name>
    <dbReference type="NCBI Taxonomy" id="7227"/>
    <lineage>
        <taxon>Eukaryota</taxon>
        <taxon>Metazoa</taxon>
        <taxon>Ecdysozoa</taxon>
        <taxon>Arthropoda</taxon>
        <taxon>Hexapoda</taxon>
        <taxon>Insecta</taxon>
        <taxon>Pterygota</taxon>
        <taxon>Neoptera</taxon>
        <taxon>Endopterygota</taxon>
        <taxon>Diptera</taxon>
        <taxon>Brachycera</taxon>
        <taxon>Muscomorpha</taxon>
        <taxon>Ephydroidea</taxon>
        <taxon>Drosophilidae</taxon>
        <taxon>Drosophila</taxon>
        <taxon>Sophophora</taxon>
    </lineage>
</organism>
<proteinExistence type="evidence at protein level"/>
<feature type="chain" id="PRO_0000076363" description="Protein Vhl">
    <location>
        <begin position="1"/>
        <end position="178"/>
    </location>
</feature>
<accession>Q9V3C1</accession>
<protein>
    <recommendedName>
        <fullName>Protein Vhl</fullName>
    </recommendedName>
</protein>
<comment type="function">
    <text evidence="1 2 3">Involved in development of tracheal vasculature. Probably involved in halting cell migration at the end of vascular tube outgrowth. Possesses E3 ubiquitin ligase activity when in complex with Elongin BC complex, Cul2 and Rox1a/Rbx1, and can target sima/Hif1a for ubiquitination. May play a critical role in promoting microtubule stabilization when tubulins are correctly folded by the prefoldin complex. If tubulin is incorrectly folded, may promote its degradation.</text>
</comment>
<comment type="pathway">
    <text>Protein modification; protein ubiquitination.</text>
</comment>
<comment type="subunit">
    <text evidence="1 2 3">Part of a complex with Cul2, Roc1a/Rbx1 and the elongin BC complex. Interacts with sima/Hif1a. Interacts with itself. Interacts with mgr and betaTub56D/tubulin beta-1 chain. Interacts with tubulin alpha-beta heterodimers by itself or in complex with mgr. Interacts with microtubules (MTs).</text>
</comment>
<comment type="interaction">
    <interactant intactId="EBI-169514">
        <id>Q9V3C1</id>
    </interactant>
    <interactant intactId="EBI-1011633">
        <id>Q7KRW1</id>
        <label>Trc8</label>
    </interactant>
    <organismsDiffer>false</organismsDiffer>
    <experiments>3</experiments>
</comment>
<comment type="developmental stage">
    <text evidence="1 2">Expressed throughout development. During embryogenesis specifically expressed in developing tracheal regions.</text>
</comment>
<comment type="similarity">
    <text evidence="4">Belongs to the VHL family.</text>
</comment>
<keyword id="KW-0037">Angiogenesis</keyword>
<keyword id="KW-0217">Developmental protein</keyword>
<keyword id="KW-0221">Differentiation</keyword>
<keyword id="KW-1185">Reference proteome</keyword>
<keyword id="KW-0833">Ubl conjugation pathway</keyword>
<gene>
    <name evidence="8" type="primary">Vhl</name>
    <name type="ORF">CG13221</name>
</gene>
<evidence type="ECO:0000269" key="1">
    <source>
    </source>
</evidence>
<evidence type="ECO:0000269" key="2">
    <source>
    </source>
</evidence>
<evidence type="ECO:0000269" key="3">
    <source>
    </source>
</evidence>
<evidence type="ECO:0000305" key="4"/>
<evidence type="ECO:0000312" key="5">
    <source>
        <dbReference type="EMBL" id="AAF29377.1"/>
    </source>
</evidence>
<evidence type="ECO:0000312" key="6">
    <source>
        <dbReference type="EMBL" id="AAF58684.1"/>
    </source>
</evidence>
<evidence type="ECO:0000312" key="7">
    <source>
        <dbReference type="EMBL" id="AAL68362.1"/>
    </source>
</evidence>
<evidence type="ECO:0000312" key="8">
    <source>
        <dbReference type="FlyBase" id="FBgn0041174"/>
    </source>
</evidence>
<evidence type="ECO:0000312" key="9">
    <source>
        <dbReference type="PIR" id="JC7399"/>
    </source>
</evidence>
<dbReference type="EMBL" id="AF195836">
    <property type="protein sequence ID" value="AAF29377.1"/>
    <property type="molecule type" value="mRNA"/>
</dbReference>
<dbReference type="EMBL" id="AE013599">
    <property type="protein sequence ID" value="AAF58684.1"/>
    <property type="molecule type" value="Genomic_DNA"/>
</dbReference>
<dbReference type="EMBL" id="AY075555">
    <property type="protein sequence ID" value="AAL68362.1"/>
    <property type="molecule type" value="mRNA"/>
</dbReference>
<dbReference type="EMBL" id="BT023867">
    <property type="protein sequence ID" value="AAZ86788.1"/>
    <property type="molecule type" value="mRNA"/>
</dbReference>
<dbReference type="PIR" id="JC7399">
    <property type="entry name" value="JC7399"/>
</dbReference>
<dbReference type="RefSeq" id="NP_001260885.1">
    <property type="nucleotide sequence ID" value="NM_001273956.1"/>
</dbReference>
<dbReference type="RefSeq" id="NP_524986.1">
    <property type="nucleotide sequence ID" value="NM_080247.3"/>
</dbReference>
<dbReference type="SMR" id="Q9V3C1"/>
<dbReference type="BioGRID" id="72721">
    <property type="interactions" value="14"/>
</dbReference>
<dbReference type="ComplexPortal" id="CPX-2561">
    <property type="entry name" value="VHL-Elongin C-Elongin B E3 ubiquitin ligase complex"/>
</dbReference>
<dbReference type="FunCoup" id="Q9V3C1">
    <property type="interactions" value="131"/>
</dbReference>
<dbReference type="IntAct" id="Q9V3C1">
    <property type="interactions" value="6"/>
</dbReference>
<dbReference type="STRING" id="7227.FBpp0087216"/>
<dbReference type="PaxDb" id="7227-FBpp0087216"/>
<dbReference type="DNASU" id="53433"/>
<dbReference type="EnsemblMetazoa" id="FBtr0088115">
    <property type="protein sequence ID" value="FBpp0087216"/>
    <property type="gene ID" value="FBgn0041174"/>
</dbReference>
<dbReference type="EnsemblMetazoa" id="FBtr0332420">
    <property type="protein sequence ID" value="FBpp0304693"/>
    <property type="gene ID" value="FBgn0041174"/>
</dbReference>
<dbReference type="GeneID" id="53433"/>
<dbReference type="KEGG" id="dme:Dmel_CG13221"/>
<dbReference type="AGR" id="FB:FBgn0041174"/>
<dbReference type="CTD" id="7428"/>
<dbReference type="FlyBase" id="FBgn0041174">
    <property type="gene designation" value="Vhl"/>
</dbReference>
<dbReference type="VEuPathDB" id="VectorBase:FBgn0041174"/>
<dbReference type="eggNOG" id="KOG4710">
    <property type="taxonomic scope" value="Eukaryota"/>
</dbReference>
<dbReference type="GeneTree" id="ENSGT00390000014353"/>
<dbReference type="HOGENOM" id="CLU_116090_1_0_1"/>
<dbReference type="InParanoid" id="Q9V3C1"/>
<dbReference type="OMA" id="WFFRDYY"/>
<dbReference type="OrthoDB" id="413400at2759"/>
<dbReference type="PhylomeDB" id="Q9V3C1"/>
<dbReference type="Reactome" id="R-DME-1234176">
    <property type="pathway name" value="Oxygen-dependent proline hydroxylation of Hypoxia-inducible Factor Alpha"/>
</dbReference>
<dbReference type="Reactome" id="R-DME-8951664">
    <property type="pathway name" value="Neddylation"/>
</dbReference>
<dbReference type="Reactome" id="R-DME-9706019">
    <property type="pathway name" value="RHOBTB3 ATPase cycle"/>
</dbReference>
<dbReference type="Reactome" id="R-DME-983168">
    <property type="pathway name" value="Antigen processing: Ubiquitination &amp; Proteasome degradation"/>
</dbReference>
<dbReference type="UniPathway" id="UPA00143"/>
<dbReference type="BioGRID-ORCS" id="53433">
    <property type="hits" value="0 hits in 3 CRISPR screens"/>
</dbReference>
<dbReference type="GenomeRNAi" id="53433"/>
<dbReference type="PRO" id="PR:Q9V3C1"/>
<dbReference type="Proteomes" id="UP000000803">
    <property type="component" value="Chromosome 2R"/>
</dbReference>
<dbReference type="Bgee" id="FBgn0041174">
    <property type="expression patterns" value="Expressed in crop (Drosophila) and 36 other cell types or tissues"/>
</dbReference>
<dbReference type="ExpressionAtlas" id="Q9V3C1">
    <property type="expression patterns" value="baseline and differential"/>
</dbReference>
<dbReference type="GO" id="GO:0005634">
    <property type="term" value="C:nucleus"/>
    <property type="evidence" value="ECO:0000318"/>
    <property type="project" value="GO_Central"/>
</dbReference>
<dbReference type="GO" id="GO:0030891">
    <property type="term" value="C:VCB complex"/>
    <property type="evidence" value="ECO:0000314"/>
    <property type="project" value="FlyBase"/>
</dbReference>
<dbReference type="GO" id="GO:0030154">
    <property type="term" value="P:cell differentiation"/>
    <property type="evidence" value="ECO:0007669"/>
    <property type="project" value="UniProtKB-KW"/>
</dbReference>
<dbReference type="GO" id="GO:0007098">
    <property type="term" value="P:centrosome cycle"/>
    <property type="evidence" value="ECO:0000316"/>
    <property type="project" value="FlyBase"/>
</dbReference>
<dbReference type="GO" id="GO:0007427">
    <property type="term" value="P:epithelial cell migration, open tracheal system"/>
    <property type="evidence" value="ECO:0000315"/>
    <property type="project" value="FlyBase"/>
</dbReference>
<dbReference type="GO" id="GO:0016334">
    <property type="term" value="P:establishment or maintenance of polarity of follicular epithelium"/>
    <property type="evidence" value="ECO:0000315"/>
    <property type="project" value="FlyBase"/>
</dbReference>
<dbReference type="GO" id="GO:0035149">
    <property type="term" value="P:lumen formation, open tracheal system"/>
    <property type="evidence" value="ECO:0000315"/>
    <property type="project" value="FlyBase"/>
</dbReference>
<dbReference type="GO" id="GO:0090307">
    <property type="term" value="P:mitotic spindle assembly"/>
    <property type="evidence" value="ECO:0000316"/>
    <property type="project" value="FlyBase"/>
</dbReference>
<dbReference type="GO" id="GO:0007026">
    <property type="term" value="P:negative regulation of microtubule depolymerization"/>
    <property type="evidence" value="ECO:0000315"/>
    <property type="project" value="FlyBase"/>
</dbReference>
<dbReference type="GO" id="GO:0007424">
    <property type="term" value="P:open tracheal system development"/>
    <property type="evidence" value="ECO:0000315"/>
    <property type="project" value="FlyBase"/>
</dbReference>
<dbReference type="GO" id="GO:0006611">
    <property type="term" value="P:protein export from nucleus"/>
    <property type="evidence" value="ECO:0000315"/>
    <property type="project" value="FlyBase"/>
</dbReference>
<dbReference type="GO" id="GO:0016567">
    <property type="term" value="P:protein ubiquitination"/>
    <property type="evidence" value="ECO:0000314"/>
    <property type="project" value="FlyBase"/>
</dbReference>
<dbReference type="GO" id="GO:1900037">
    <property type="term" value="P:regulation of cellular response to hypoxia"/>
    <property type="evidence" value="ECO:0000315"/>
    <property type="project" value="FlyBase"/>
</dbReference>
<dbReference type="GO" id="GO:0060438">
    <property type="term" value="P:trachea development"/>
    <property type="evidence" value="ECO:0000315"/>
    <property type="project" value="FlyBase"/>
</dbReference>
<dbReference type="CDD" id="cd05468">
    <property type="entry name" value="pVHL"/>
    <property type="match status" value="1"/>
</dbReference>
<dbReference type="FunFam" id="2.60.40.780:FF:000003">
    <property type="entry name" value="Protein Vhl"/>
    <property type="match status" value="1"/>
</dbReference>
<dbReference type="Gene3D" id="2.60.40.780">
    <property type="entry name" value="von Hippel-Lindau disease tumour suppressor, beta domain"/>
    <property type="match status" value="1"/>
</dbReference>
<dbReference type="InterPro" id="IPR024053">
    <property type="entry name" value="VHL_beta_dom"/>
</dbReference>
<dbReference type="InterPro" id="IPR037140">
    <property type="entry name" value="VHL_beta_dom_sf"/>
</dbReference>
<dbReference type="InterPro" id="IPR036208">
    <property type="entry name" value="VHL_sf"/>
</dbReference>
<dbReference type="InterPro" id="IPR022772">
    <property type="entry name" value="VHL_tumour_suppress_b/a_dom"/>
</dbReference>
<dbReference type="Pfam" id="PF01847">
    <property type="entry name" value="VHL"/>
    <property type="match status" value="1"/>
</dbReference>
<dbReference type="SUPFAM" id="SSF49468">
    <property type="entry name" value="VHL"/>
    <property type="match status" value="1"/>
</dbReference>
<name>VHL_DROME</name>
<reference evidence="4 9" key="1">
    <citation type="journal article" date="2000" name="Biochem. Biophys. Res. Commun.">
        <title>Drosophila von Hippel-Lindau tumor suppressor complex possesses E3 ubiquitin ligase activity.</title>
        <authorList>
            <person name="Aso T."/>
            <person name="Yamazaki K."/>
            <person name="Aigaki T."/>
            <person name="Kitajima S."/>
        </authorList>
    </citation>
    <scope>NUCLEOTIDE SEQUENCE [MRNA]</scope>
    <scope>FUNCTION</scope>
    <scope>IDENTIFICATION IN A COMPLEX WITH CUL2; ROX1A AND ELONGINS B AND C</scope>
    <scope>INTERACTION WITH SIMA</scope>
    <scope>DEVELOPMENTAL STAGE</scope>
</reference>
<reference evidence="4 5" key="2">
    <citation type="journal article" date="2000" name="Oncogene">
        <title>Tracheal development and the von Hippel-Lindau tumor suppressor homolog in Drosophila.</title>
        <authorList>
            <person name="Adryan B."/>
            <person name="Decker H.-J."/>
            <person name="Papas T.S."/>
            <person name="Hsu T."/>
        </authorList>
    </citation>
    <scope>NUCLEOTIDE SEQUENCE [MRNA]</scope>
    <scope>FUNCTION AS A UBIQUITIN LIGASE</scope>
    <scope>INTERACTION WITH ELONGIN C</scope>
    <scope>DEVELOPMENTAL STAGE</scope>
    <source>
        <tissue evidence="5">Ovary</tissue>
    </source>
</reference>
<reference evidence="6" key="3">
    <citation type="journal article" date="2000" name="Science">
        <title>The genome sequence of Drosophila melanogaster.</title>
        <authorList>
            <person name="Adams M.D."/>
            <person name="Celniker S.E."/>
            <person name="Holt R.A."/>
            <person name="Evans C.A."/>
            <person name="Gocayne J.D."/>
            <person name="Amanatides P.G."/>
            <person name="Scherer S.E."/>
            <person name="Li P.W."/>
            <person name="Hoskins R.A."/>
            <person name="Galle R.F."/>
            <person name="George R.A."/>
            <person name="Lewis S.E."/>
            <person name="Richards S."/>
            <person name="Ashburner M."/>
            <person name="Henderson S.N."/>
            <person name="Sutton G.G."/>
            <person name="Wortman J.R."/>
            <person name="Yandell M.D."/>
            <person name="Zhang Q."/>
            <person name="Chen L.X."/>
            <person name="Brandon R.C."/>
            <person name="Rogers Y.-H.C."/>
            <person name="Blazej R.G."/>
            <person name="Champe M."/>
            <person name="Pfeiffer B.D."/>
            <person name="Wan K.H."/>
            <person name="Doyle C."/>
            <person name="Baxter E.G."/>
            <person name="Helt G."/>
            <person name="Nelson C.R."/>
            <person name="Miklos G.L.G."/>
            <person name="Abril J.F."/>
            <person name="Agbayani A."/>
            <person name="An H.-J."/>
            <person name="Andrews-Pfannkoch C."/>
            <person name="Baldwin D."/>
            <person name="Ballew R.M."/>
            <person name="Basu A."/>
            <person name="Baxendale J."/>
            <person name="Bayraktaroglu L."/>
            <person name="Beasley E.M."/>
            <person name="Beeson K.Y."/>
            <person name="Benos P.V."/>
            <person name="Berman B.P."/>
            <person name="Bhandari D."/>
            <person name="Bolshakov S."/>
            <person name="Borkova D."/>
            <person name="Botchan M.R."/>
            <person name="Bouck J."/>
            <person name="Brokstein P."/>
            <person name="Brottier P."/>
            <person name="Burtis K.C."/>
            <person name="Busam D.A."/>
            <person name="Butler H."/>
            <person name="Cadieu E."/>
            <person name="Center A."/>
            <person name="Chandra I."/>
            <person name="Cherry J.M."/>
            <person name="Cawley S."/>
            <person name="Dahlke C."/>
            <person name="Davenport L.B."/>
            <person name="Davies P."/>
            <person name="de Pablos B."/>
            <person name="Delcher A."/>
            <person name="Deng Z."/>
            <person name="Mays A.D."/>
            <person name="Dew I."/>
            <person name="Dietz S.M."/>
            <person name="Dodson K."/>
            <person name="Doup L.E."/>
            <person name="Downes M."/>
            <person name="Dugan-Rocha S."/>
            <person name="Dunkov B.C."/>
            <person name="Dunn P."/>
            <person name="Durbin K.J."/>
            <person name="Evangelista C.C."/>
            <person name="Ferraz C."/>
            <person name="Ferriera S."/>
            <person name="Fleischmann W."/>
            <person name="Fosler C."/>
            <person name="Gabrielian A.E."/>
            <person name="Garg N.S."/>
            <person name="Gelbart W.M."/>
            <person name="Glasser K."/>
            <person name="Glodek A."/>
            <person name="Gong F."/>
            <person name="Gorrell J.H."/>
            <person name="Gu Z."/>
            <person name="Guan P."/>
            <person name="Harris M."/>
            <person name="Harris N.L."/>
            <person name="Harvey D.A."/>
            <person name="Heiman T.J."/>
            <person name="Hernandez J.R."/>
            <person name="Houck J."/>
            <person name="Hostin D."/>
            <person name="Houston K.A."/>
            <person name="Howland T.J."/>
            <person name="Wei M.-H."/>
            <person name="Ibegwam C."/>
            <person name="Jalali M."/>
            <person name="Kalush F."/>
            <person name="Karpen G.H."/>
            <person name="Ke Z."/>
            <person name="Kennison J.A."/>
            <person name="Ketchum K.A."/>
            <person name="Kimmel B.E."/>
            <person name="Kodira C.D."/>
            <person name="Kraft C.L."/>
            <person name="Kravitz S."/>
            <person name="Kulp D."/>
            <person name="Lai Z."/>
            <person name="Lasko P."/>
            <person name="Lei Y."/>
            <person name="Levitsky A.A."/>
            <person name="Li J.H."/>
            <person name="Li Z."/>
            <person name="Liang Y."/>
            <person name="Lin X."/>
            <person name="Liu X."/>
            <person name="Mattei B."/>
            <person name="McIntosh T.C."/>
            <person name="McLeod M.P."/>
            <person name="McPherson D."/>
            <person name="Merkulov G."/>
            <person name="Milshina N.V."/>
            <person name="Mobarry C."/>
            <person name="Morris J."/>
            <person name="Moshrefi A."/>
            <person name="Mount S.M."/>
            <person name="Moy M."/>
            <person name="Murphy B."/>
            <person name="Murphy L."/>
            <person name="Muzny D.M."/>
            <person name="Nelson D.L."/>
            <person name="Nelson D.R."/>
            <person name="Nelson K.A."/>
            <person name="Nixon K."/>
            <person name="Nusskern D.R."/>
            <person name="Pacleb J.M."/>
            <person name="Palazzolo M."/>
            <person name="Pittman G.S."/>
            <person name="Pan S."/>
            <person name="Pollard J."/>
            <person name="Puri V."/>
            <person name="Reese M.G."/>
            <person name="Reinert K."/>
            <person name="Remington K."/>
            <person name="Saunders R.D.C."/>
            <person name="Scheeler F."/>
            <person name="Shen H."/>
            <person name="Shue B.C."/>
            <person name="Siden-Kiamos I."/>
            <person name="Simpson M."/>
            <person name="Skupski M.P."/>
            <person name="Smith T.J."/>
            <person name="Spier E."/>
            <person name="Spradling A.C."/>
            <person name="Stapleton M."/>
            <person name="Strong R."/>
            <person name="Sun E."/>
            <person name="Svirskas R."/>
            <person name="Tector C."/>
            <person name="Turner R."/>
            <person name="Venter E."/>
            <person name="Wang A.H."/>
            <person name="Wang X."/>
            <person name="Wang Z.-Y."/>
            <person name="Wassarman D.A."/>
            <person name="Weinstock G.M."/>
            <person name="Weissenbach J."/>
            <person name="Williams S.M."/>
            <person name="Woodage T."/>
            <person name="Worley K.C."/>
            <person name="Wu D."/>
            <person name="Yang S."/>
            <person name="Yao Q.A."/>
            <person name="Ye J."/>
            <person name="Yeh R.-F."/>
            <person name="Zaveri J.S."/>
            <person name="Zhan M."/>
            <person name="Zhang G."/>
            <person name="Zhao Q."/>
            <person name="Zheng L."/>
            <person name="Zheng X.H."/>
            <person name="Zhong F.N."/>
            <person name="Zhong W."/>
            <person name="Zhou X."/>
            <person name="Zhu S.C."/>
            <person name="Zhu X."/>
            <person name="Smith H.O."/>
            <person name="Gibbs R.A."/>
            <person name="Myers E.W."/>
            <person name="Rubin G.M."/>
            <person name="Venter J.C."/>
        </authorList>
    </citation>
    <scope>NUCLEOTIDE SEQUENCE [LARGE SCALE GENOMIC DNA]</scope>
    <source>
        <strain evidence="6">Berkeley</strain>
    </source>
</reference>
<reference evidence="6" key="4">
    <citation type="journal article" date="2002" name="Genome Biol.">
        <title>Annotation of the Drosophila melanogaster euchromatic genome: a systematic review.</title>
        <authorList>
            <person name="Misra S."/>
            <person name="Crosby M.A."/>
            <person name="Mungall C.J."/>
            <person name="Matthews B.B."/>
            <person name="Campbell K.S."/>
            <person name="Hradecky P."/>
            <person name="Huang Y."/>
            <person name="Kaminker J.S."/>
            <person name="Millburn G.H."/>
            <person name="Prochnik S.E."/>
            <person name="Smith C.D."/>
            <person name="Tupy J.L."/>
            <person name="Whitfield E.J."/>
            <person name="Bayraktaroglu L."/>
            <person name="Berman B.P."/>
            <person name="Bettencourt B.R."/>
            <person name="Celniker S.E."/>
            <person name="de Grey A.D.N.J."/>
            <person name="Drysdale R.A."/>
            <person name="Harris N.L."/>
            <person name="Richter J."/>
            <person name="Russo S."/>
            <person name="Schroeder A.J."/>
            <person name="Shu S.Q."/>
            <person name="Stapleton M."/>
            <person name="Yamada C."/>
            <person name="Ashburner M."/>
            <person name="Gelbart W.M."/>
            <person name="Rubin G.M."/>
            <person name="Lewis S.E."/>
        </authorList>
    </citation>
    <scope>GENOME REANNOTATION</scope>
    <source>
        <strain>Berkeley</strain>
    </source>
</reference>
<reference evidence="7" key="5">
    <citation type="journal article" date="2002" name="Genome Biol.">
        <title>A Drosophila full-length cDNA resource.</title>
        <authorList>
            <person name="Stapleton M."/>
            <person name="Carlson J.W."/>
            <person name="Brokstein P."/>
            <person name="Yu C."/>
            <person name="Champe M."/>
            <person name="George R.A."/>
            <person name="Guarin H."/>
            <person name="Kronmiller B."/>
            <person name="Pacleb J.M."/>
            <person name="Park S."/>
            <person name="Wan K.H."/>
            <person name="Rubin G.M."/>
            <person name="Celniker S.E."/>
        </authorList>
    </citation>
    <scope>NUCLEOTIDE SEQUENCE [LARGE SCALE MRNA]</scope>
    <source>
        <strain evidence="7">Berkeley</strain>
        <tissue evidence="7">Head</tissue>
    </source>
</reference>
<reference key="6">
    <citation type="journal article" date="2012" name="Proc. Natl. Acad. Sci. U.S.A.">
        <title>Drosophila Mgr, a Prefoldin subunit cooperating with von Hippel Lindau to regulate tubulin stability.</title>
        <authorList>
            <person name="Delgehyr N."/>
            <person name="Wieland U."/>
            <person name="Rangone H."/>
            <person name="Pinson X."/>
            <person name="Mao G."/>
            <person name="Dzhindzhev N.S."/>
            <person name="McLean D."/>
            <person name="Riparbelli M.G."/>
            <person name="Llamazares S."/>
            <person name="Callaini G."/>
            <person name="Gonzalez C."/>
            <person name="Glover D.M."/>
        </authorList>
    </citation>
    <scope>FUNCTION</scope>
    <scope>SELF-ASSOCIATION</scope>
    <scope>INTERACTION WITH MGR; BETATUB56D; TUBULIN ALPHA-BETA HETERODIMER AND MICROTUBULES</scope>
</reference>
<sequence>MALQIAQNNRDGQQLVGADQGKVEVYVLFANTTYRTLDLYWVCERERENMYLTLKPFEEVRVNTFTTHSWLFRDYYTGERMHVRSQRIFQPIRVRVPKSQQSPDQLVDVRSEVLIHFPMRSLRENCLWLVARWLIRTSNAPRRIIHGYHIPSTLKQQLLSLLTCIESYSRVAGTRRRR</sequence>